<name>LAMB2_HUMAN</name>
<sequence>MELTSRERGRGQPLPWELRLGLLLSVLAATLAQAPAPDVPGCSRGSCYPATGDLLVGRADRLTASSTCGLNGPQPYCIVSHLQDEKKCFLCDSRRPFSARDNPHSHRIQNVVTSFAPQRRAAWWQSENGIPAVTIQLDLEAEFHFTHLIMTFKTFRPAAMLVERSADFGRTWHVYRYFSYDCGADFPGVPLAPPRHWDDVVCESRYSEIEPSTEGEVIYRVLDPAIPIPDPYSSRIQNLLKITNLRVNLTRLHTLGDNLLDPRREIREKYYYALYELVVRGNCFCYGHASECAPAPGAPAHAEGMVHGACICKHNTRGLNCEQCQDFYRDLPWRPAEDGHSHACRKCECHGHTHSCHFDMAVYLASGNVSGGVCDGCQHNTAGRHCELCRPFFYRDPTKDLRDPAVCRSCDCDPMGSQDGGRCDSHDDPALGLVSGQCRCKEHVVGTRCQQCRDGFFGLSISDRLGCRRCQCNARGTVPGSTPCDPNSGSCYCKRLVTGRGCDRCLPGHWGLSHDLLGCRPCDCDVGGALDPQCDEGTGQCHCRQHMVGRRCEQVQPGYFRPFLDHLIWEAEDTRGQVLDVVERLVTPGETPSWTGSGFVRLQEGQTLEFLVASVPKAMDYDLLLRLEPQVPEQWAELELIVQRPGPVPAHSLCGHLVPKDDRIQGTLQPHARYLIFPNPVCLEPGISYKLHLKLVRTGGSAQPETPYSGPGLLIDSLVLLPRVLVLEMFSGGDAAALERQATFERYQCHEEGLVPSKTSPSEACAPLLISLSTLIYNGALPCQCNPQGSLSSECNPHGGQCLCKPGVVGRRCDLCAPGYYGFGPTGCQACQCSHEGALSSLCEKTSGQCLCRTGAFGLRCDRCQRGQWGFPSCRPCVCNGHADECNTHTGACLGCRDHTGGEHCERCIAGFHGDPRLPYGGQCRPCPCPEGPGSQRHFATSCHQDEYSQQIVCHCRAGYTGLRCEACAPGHFGDPSRPGGRCQLCECSGNIDPMDPDACDPHTGQCLRCLHHTEGPHCAHCKPGFHGQAARQSCHRCTCNLLGTNPQQCPSPDQCHCDPSSGQCPCLPNVQGPSCDRCAPNFWNLTSGHGCQPCACHPSRARGPTCNEFTGQCHCRAGFGGRTCSECQELHWGDPGLQCHACDCDSRGIDTPQCHRFTGHCSCRPGVSGVRCDQCARGFSGIFPACHPCHACFGDWDRVVQDLAARTQRLEQRAQELQQTGVLGAFESSFWHMQEKLGIVQGIVGARNTSAASTAQLVEATEELRREIGEATEHLTQLEADLTDVQDENFNANHALSGLERDRLALNLTLRQLDQHLDLLKHSNFLGAYDSIRHAHSQSAEAERRANTSALAVPSPVSNSASARHRTEALMDAQKEDFNSKHMANQRALGKLSAHTHTLSLTDINELVCGAPGDAPCATSPCGGAGCRDEDGQPRCGGLSCNGAAATADLALGRARHTQAELQRALAEGGSILSRVAETRRQASEAQQRAQAALDKANASRGQVEQANQELQELIQSVKDFLNQEGADPDSIEMVATRVLELSIPASAEQIQHLAGAIAERVRSLADVDAILARTVGDVRRAEQLLQDARRARSWAEDEKQKAETVQAALEEAQRAQGIAQGAIRGAVADTRDTEQTLYQVQERMAGAERALSSAGERARQLDALLEALKLKRAGNSLAASTAEETAGSAQGRAQEAEQLLRGPLGDQYQTVKALAERKAQGVLAAQARAEQLRDEARDLLQAAQDKLQRLQELEGTYEENERALESKAAQLDGLEARMRSVLQAINLQVQIYNTCQ</sequence>
<reference key="1">
    <citation type="journal article" date="1994" name="Genomics">
        <title>Human beta 2 chain of laminin (formerly S chain): cDNA cloning, chromosomal localization, and expression in carcinomas.</title>
        <authorList>
            <person name="Wewer U.M."/>
            <person name="Gerecke D.R."/>
            <person name="Durkin M.E."/>
            <person name="Kurtz K.S."/>
            <person name="Mattei M.-G."/>
            <person name="Champliaud M.-F."/>
            <person name="Burgeson R.E."/>
            <person name="Albrechtsen R."/>
        </authorList>
    </citation>
    <scope>NUCLEOTIDE SEQUENCE [GENOMIC DNA / MRNA]</scope>
</reference>
<reference key="2">
    <citation type="journal article" date="1995" name="Matrix Biol.">
        <title>The human laminin beta 2 chain (S-laminin): structure, expression in fetal tissues and chromosomal assignment of the LAMB2 gene.</title>
        <authorList>
            <person name="Iivanainen A."/>
            <person name="Vuolteenaho R."/>
            <person name="Sainio K."/>
            <person name="Eddy R."/>
            <person name="Shows T.B."/>
            <person name="Sariola H."/>
            <person name="Tryggvason K."/>
        </authorList>
    </citation>
    <scope>NUCLEOTIDE SEQUENCE [MRNA]</scope>
</reference>
<reference key="3">
    <citation type="journal article" date="2009" name="J. Proteome Res.">
        <title>Glycoproteomics analysis of human liver tissue by combination of multiple enzyme digestion and hydrazide chemistry.</title>
        <authorList>
            <person name="Chen R."/>
            <person name="Jiang X."/>
            <person name="Sun D."/>
            <person name="Han G."/>
            <person name="Wang F."/>
            <person name="Ye M."/>
            <person name="Wang L."/>
            <person name="Zou H."/>
        </authorList>
    </citation>
    <scope>GLYCOSYLATION [LARGE SCALE ANALYSIS] AT ASN-1308; ASN-1348 AND ASN-1499</scope>
    <source>
        <tissue>Liver</tissue>
    </source>
</reference>
<reference key="4">
    <citation type="journal article" date="2011" name="BMC Syst. Biol.">
        <title>Initial characterization of the human central proteome.</title>
        <authorList>
            <person name="Burkard T.R."/>
            <person name="Planyavsky M."/>
            <person name="Kaupe I."/>
            <person name="Breitwieser F.P."/>
            <person name="Buerckstuemmer T."/>
            <person name="Bennett K.L."/>
            <person name="Superti-Furga G."/>
            <person name="Colinge J."/>
        </authorList>
    </citation>
    <scope>IDENTIFICATION BY MASS SPECTROMETRY [LARGE SCALE ANALYSIS]</scope>
</reference>
<reference key="5">
    <citation type="journal article" date="2014" name="J. Proteomics">
        <title>An enzyme assisted RP-RPLC approach for in-depth analysis of human liver phosphoproteome.</title>
        <authorList>
            <person name="Bian Y."/>
            <person name="Song C."/>
            <person name="Cheng K."/>
            <person name="Dong M."/>
            <person name="Wang F."/>
            <person name="Huang J."/>
            <person name="Sun D."/>
            <person name="Wang L."/>
            <person name="Ye M."/>
            <person name="Zou H."/>
        </authorList>
    </citation>
    <scope>IDENTIFICATION BY MASS SPECTROMETRY [LARGE SCALE ANALYSIS]</scope>
    <source>
        <tissue>Liver</tissue>
    </source>
</reference>
<reference key="6">
    <citation type="journal article" date="2015" name="Cell">
        <title>A single kinase generates the majority of the secreted phosphoproteome.</title>
        <authorList>
            <person name="Tagliabracci V.S."/>
            <person name="Wiley S.E."/>
            <person name="Guo X."/>
            <person name="Kinch L.N."/>
            <person name="Durrant E."/>
            <person name="Wen J."/>
            <person name="Xiao J."/>
            <person name="Cui J."/>
            <person name="Nguyen K.B."/>
            <person name="Engel J.L."/>
            <person name="Coon J.J."/>
            <person name="Grishin N."/>
            <person name="Pinna L.A."/>
            <person name="Pagliarini D.J."/>
            <person name="Dixon J.E."/>
        </authorList>
    </citation>
    <scope>PHOSPHORYLATION AT SER-1532</scope>
</reference>
<reference key="7">
    <citation type="journal article" date="2004" name="Hum. Mol. Genet.">
        <title>Human laminin beta2 deficiency causes congenital nephrosis with mesangial sclerosis and distinct eye abnormalities.</title>
        <authorList>
            <person name="Zenker M."/>
            <person name="Aigner T."/>
            <person name="Wendler O."/>
            <person name="Tralau T."/>
            <person name="Muentefering H."/>
            <person name="Fenski R."/>
            <person name="Pitz S."/>
            <person name="Schumacher V."/>
            <person name="Royer-Pokora B."/>
            <person name="Wuehl E."/>
            <person name="Cochat P."/>
            <person name="Bouvier R."/>
            <person name="Kraus C."/>
            <person name="Mark K."/>
            <person name="Madlon H."/>
            <person name="Doetsch J."/>
            <person name="Rascher W."/>
            <person name="Maruniak-Chudek I."/>
            <person name="Lennert T."/>
            <person name="Neumann L.M."/>
            <person name="Reis A."/>
        </authorList>
    </citation>
    <scope>VARIANT PIERS TRP-246</scope>
</reference>
<reference key="8">
    <citation type="journal article" date="2006" name="Kidney Int.">
        <title>Recessive missense mutations in LAMB2 expand the clinical spectrum of LAMB2-associated disorders.</title>
        <authorList>
            <person name="Hasselbacher K."/>
            <person name="Wiggins R.C."/>
            <person name="Matejas V."/>
            <person name="Hinkes B.G."/>
            <person name="Mucha B."/>
            <person name="Hoskins B.E."/>
            <person name="Ozaltin F."/>
            <person name="Nuernberg G."/>
            <person name="Becker C."/>
            <person name="Hangan D."/>
            <person name="Pohl M."/>
            <person name="Kuwertz-Broeking E."/>
            <person name="Griebel M."/>
            <person name="Schumacher V."/>
            <person name="Royer-Pokora B."/>
            <person name="Bakkaloglu A."/>
            <person name="Nuernberg P."/>
            <person name="Zenker M."/>
            <person name="Hildebrandt F."/>
        </authorList>
    </citation>
    <scope>VARIANTS NPHS5 GLN-246; ARG-321; LYS-1380 AND PHE-1393</scope>
</reference>
<reference key="9">
    <citation type="journal article" date="2010" name="Clin. J. Am. Soc. Nephrol.">
        <title>Immunosuppression and renal outcome in congenital and pediatric steroid-resistant nephrotic syndrome.</title>
        <authorList>
            <person name="Buescher A.K."/>
            <person name="Kranz B."/>
            <person name="Buescher R."/>
            <person name="Hildebrandt F."/>
            <person name="Dworniczak B."/>
            <person name="Pennekamp P."/>
            <person name="Kuwertz-Broeking E."/>
            <person name="Wingen A.M."/>
            <person name="John U."/>
            <person name="Kemper M."/>
            <person name="Monnens L."/>
            <person name="Hoyer P.F."/>
            <person name="Weber S."/>
            <person name="Konrad M."/>
        </authorList>
    </citation>
    <scope>VARIANTS NPHS5 ARG-321; LYS-1380 AND PHE-1393</scope>
</reference>
<reference key="10">
    <citation type="journal article" date="2011" name="Ophthalmology">
        <title>A novel mutation of LAMB2 in a multigenerational mennonite family reveals a new phenotypic variant of Pierson syndrome.</title>
        <authorList>
            <person name="Mohney B.G."/>
            <person name="Pulido J.S."/>
            <person name="Lindor N.M."/>
            <person name="Hogan M.C."/>
            <person name="Consugar M.B."/>
            <person name="Peters J."/>
            <person name="Pankratz V.S."/>
            <person name="Nasr S.H."/>
            <person name="Smith S.J."/>
            <person name="Gloor J."/>
            <person name="Kubly V."/>
            <person name="Spencer D."/>
            <person name="Nielson R."/>
            <person name="Puffenberger E.G."/>
            <person name="Strauss K.A."/>
            <person name="Morton D.H."/>
            <person name="Eldahdah L."/>
            <person name="Harris P.C."/>
        </authorList>
    </citation>
    <scope>VARIANT NPHS5 ARG-147</scope>
</reference>
<reference key="11">
    <citation type="journal article" date="2013" name="J. Hum. Genet.">
        <title>A molecular genetic analysis of childhood nephrotic syndrome in a cohort of Saudi Arabian families.</title>
        <authorList>
            <person name="Al-Hamed M.H."/>
            <person name="Al-Sabban E."/>
            <person name="Al-Mojalli H."/>
            <person name="Al-Harbi N."/>
            <person name="Faqeih E."/>
            <person name="Al Shaya H."/>
            <person name="Alhasan K."/>
            <person name="Al-Hissi S."/>
            <person name="Rajab M."/>
            <person name="Edwards N."/>
            <person name="Al-Abbad A."/>
            <person name="Al-Hassoun I."/>
            <person name="Sayer J.A."/>
            <person name="Meyer B.F."/>
        </authorList>
    </citation>
    <scope>VARIANTS NPHS5 HIS-644 AND VAL-1258</scope>
    <scope>VARIANTS GLU-700; HIS-1148 AND THR-1765</scope>
</reference>
<keyword id="KW-0084">Basement membrane</keyword>
<keyword id="KW-0130">Cell adhesion</keyword>
<keyword id="KW-0175">Coiled coil</keyword>
<keyword id="KW-0225">Disease variant</keyword>
<keyword id="KW-1015">Disulfide bond</keyword>
<keyword id="KW-0272">Extracellular matrix</keyword>
<keyword id="KW-0325">Glycoprotein</keyword>
<keyword id="KW-0424">Laminin EGF-like domain</keyword>
<keyword id="KW-0597">Phosphoprotein</keyword>
<keyword id="KW-1267">Proteomics identification</keyword>
<keyword id="KW-1185">Reference proteome</keyword>
<keyword id="KW-0677">Repeat</keyword>
<keyword id="KW-0964">Secreted</keyword>
<keyword id="KW-0732">Signal</keyword>
<organism>
    <name type="scientific">Homo sapiens</name>
    <name type="common">Human</name>
    <dbReference type="NCBI Taxonomy" id="9606"/>
    <lineage>
        <taxon>Eukaryota</taxon>
        <taxon>Metazoa</taxon>
        <taxon>Chordata</taxon>
        <taxon>Craniata</taxon>
        <taxon>Vertebrata</taxon>
        <taxon>Euteleostomi</taxon>
        <taxon>Mammalia</taxon>
        <taxon>Eutheria</taxon>
        <taxon>Euarchontoglires</taxon>
        <taxon>Primates</taxon>
        <taxon>Haplorrhini</taxon>
        <taxon>Catarrhini</taxon>
        <taxon>Hominidae</taxon>
        <taxon>Homo</taxon>
    </lineage>
</organism>
<gene>
    <name type="primary">LAMB2</name>
    <name type="synonym">LAMS</name>
</gene>
<feature type="signal peptide" evidence="1">
    <location>
        <begin position="1"/>
        <end position="32"/>
    </location>
</feature>
<feature type="chain" id="PRO_0000017068" description="Laminin subunit beta-2">
    <location>
        <begin position="33"/>
        <end position="1798"/>
    </location>
</feature>
<feature type="domain" description="Laminin N-terminal" evidence="4">
    <location>
        <begin position="43"/>
        <end position="282"/>
    </location>
</feature>
<feature type="domain" description="Laminin EGF-like 1" evidence="2">
    <location>
        <begin position="283"/>
        <end position="346"/>
    </location>
</feature>
<feature type="domain" description="Laminin EGF-like 2" evidence="2">
    <location>
        <begin position="347"/>
        <end position="409"/>
    </location>
</feature>
<feature type="domain" description="Laminin EGF-like 3" evidence="2">
    <location>
        <begin position="410"/>
        <end position="469"/>
    </location>
</feature>
<feature type="domain" description="Laminin EGF-like 4" evidence="2">
    <location>
        <begin position="470"/>
        <end position="521"/>
    </location>
</feature>
<feature type="domain" description="Laminin EGF-like 5; truncated" evidence="2">
    <location>
        <begin position="522"/>
        <end position="552"/>
    </location>
</feature>
<feature type="domain" description="Laminin IV type B" evidence="3">
    <location>
        <begin position="561"/>
        <end position="777"/>
    </location>
</feature>
<feature type="domain" description="Laminin EGF-like 6" evidence="2">
    <location>
        <begin position="783"/>
        <end position="830"/>
    </location>
</feature>
<feature type="domain" description="Laminin EGF-like 7" evidence="2">
    <location>
        <begin position="831"/>
        <end position="876"/>
    </location>
</feature>
<feature type="domain" description="Laminin EGF-like 8" evidence="2">
    <location>
        <begin position="877"/>
        <end position="926"/>
    </location>
</feature>
<feature type="domain" description="Laminin EGF-like 9" evidence="2">
    <location>
        <begin position="927"/>
        <end position="985"/>
    </location>
</feature>
<feature type="domain" description="Laminin EGF-like 10" evidence="2">
    <location>
        <begin position="986"/>
        <end position="1037"/>
    </location>
</feature>
<feature type="domain" description="Laminin EGF-like 11" evidence="2">
    <location>
        <begin position="1038"/>
        <end position="1094"/>
    </location>
</feature>
<feature type="domain" description="Laminin EGF-like 12" evidence="2">
    <location>
        <begin position="1095"/>
        <end position="1142"/>
    </location>
</feature>
<feature type="domain" description="Laminin EGF-like 13" evidence="2">
    <location>
        <begin position="1143"/>
        <end position="1189"/>
    </location>
</feature>
<feature type="region of interest" description="Domain II">
    <location>
        <begin position="1190"/>
        <end position="1409"/>
    </location>
</feature>
<feature type="region of interest" description="Disordered" evidence="5">
    <location>
        <begin position="1338"/>
        <end position="1364"/>
    </location>
</feature>
<feature type="region of interest" description="Domain alpha">
    <location>
        <begin position="1410"/>
        <end position="1442"/>
    </location>
</feature>
<feature type="region of interest" description="Domain I">
    <location>
        <begin position="1443"/>
        <end position="1798"/>
    </location>
</feature>
<feature type="coiled-coil region" evidence="1">
    <location>
        <begin position="1253"/>
        <end position="1319"/>
    </location>
</feature>
<feature type="coiled-coil region" evidence="1">
    <location>
        <begin position="1472"/>
        <end position="1526"/>
    </location>
</feature>
<feature type="coiled-coil region" evidence="1">
    <location>
        <begin position="1577"/>
        <end position="1790"/>
    </location>
</feature>
<feature type="compositionally biased region" description="Low complexity" evidence="5">
    <location>
        <begin position="1350"/>
        <end position="1363"/>
    </location>
</feature>
<feature type="modified residue" description="Phosphoserine; by FAM20C" evidence="12">
    <location>
        <position position="1532"/>
    </location>
</feature>
<feature type="glycosylation site" description="N-linked (GlcNAc...) asparagine" evidence="1">
    <location>
        <position position="248"/>
    </location>
</feature>
<feature type="glycosylation site" description="N-linked (GlcNAc...) asparagine" evidence="1">
    <location>
        <position position="368"/>
    </location>
</feature>
<feature type="glycosylation site" description="N-linked (GlcNAc...) asparagine" evidence="1">
    <location>
        <position position="1085"/>
    </location>
</feature>
<feature type="glycosylation site" description="N-linked (GlcNAc...) asparagine" evidence="1">
    <location>
        <position position="1249"/>
    </location>
</feature>
<feature type="glycosylation site" description="N-linked (GlcNAc...) asparagine" evidence="8">
    <location>
        <position position="1308"/>
    </location>
</feature>
<feature type="glycosylation site" description="N-linked (GlcNAc...) asparagine" evidence="8">
    <location>
        <position position="1348"/>
    </location>
</feature>
<feature type="glycosylation site" description="N-linked (GlcNAc...) asparagine" evidence="8">
    <location>
        <position position="1499"/>
    </location>
</feature>
<feature type="disulfide bond" evidence="2">
    <location>
        <begin position="283"/>
        <end position="292"/>
    </location>
</feature>
<feature type="disulfide bond" evidence="2">
    <location>
        <begin position="285"/>
        <end position="310"/>
    </location>
</feature>
<feature type="disulfide bond" evidence="2">
    <location>
        <begin position="312"/>
        <end position="321"/>
    </location>
</feature>
<feature type="disulfide bond" evidence="2">
    <location>
        <begin position="324"/>
        <end position="344"/>
    </location>
</feature>
<feature type="disulfide bond" evidence="2">
    <location>
        <begin position="347"/>
        <end position="356"/>
    </location>
</feature>
<feature type="disulfide bond" evidence="2">
    <location>
        <begin position="349"/>
        <end position="374"/>
    </location>
</feature>
<feature type="disulfide bond" evidence="2">
    <location>
        <begin position="377"/>
        <end position="386"/>
    </location>
</feature>
<feature type="disulfide bond" evidence="2">
    <location>
        <begin position="389"/>
        <end position="407"/>
    </location>
</feature>
<feature type="disulfide bond" evidence="2">
    <location>
        <begin position="410"/>
        <end position="423"/>
    </location>
</feature>
<feature type="disulfide bond" evidence="2">
    <location>
        <begin position="412"/>
        <end position="438"/>
    </location>
</feature>
<feature type="disulfide bond" evidence="2">
    <location>
        <begin position="440"/>
        <end position="449"/>
    </location>
</feature>
<feature type="disulfide bond" evidence="2">
    <location>
        <begin position="452"/>
        <end position="467"/>
    </location>
</feature>
<feature type="disulfide bond" evidence="2">
    <location>
        <begin position="470"/>
        <end position="484"/>
    </location>
</feature>
<feature type="disulfide bond" evidence="2">
    <location>
        <begin position="472"/>
        <end position="491"/>
    </location>
</feature>
<feature type="disulfide bond" evidence="2">
    <location>
        <begin position="493"/>
        <end position="502"/>
    </location>
</feature>
<feature type="disulfide bond" evidence="2">
    <location>
        <begin position="505"/>
        <end position="519"/>
    </location>
</feature>
<feature type="disulfide bond" evidence="2">
    <location>
        <begin position="522"/>
        <end position="534"/>
    </location>
</feature>
<feature type="disulfide bond" evidence="2">
    <location>
        <begin position="524"/>
        <end position="541"/>
    </location>
</feature>
<feature type="disulfide bond" evidence="2">
    <location>
        <begin position="543"/>
        <end position="552"/>
    </location>
</feature>
<feature type="disulfide bond" evidence="2">
    <location>
        <begin position="783"/>
        <end position="795"/>
    </location>
</feature>
<feature type="disulfide bond" evidence="2">
    <location>
        <begin position="785"/>
        <end position="802"/>
    </location>
</feature>
<feature type="disulfide bond" evidence="2">
    <location>
        <begin position="804"/>
        <end position="813"/>
    </location>
</feature>
<feature type="disulfide bond" evidence="2">
    <location>
        <begin position="816"/>
        <end position="828"/>
    </location>
</feature>
<feature type="disulfide bond" evidence="2">
    <location>
        <begin position="831"/>
        <end position="843"/>
    </location>
</feature>
<feature type="disulfide bond" evidence="2">
    <location>
        <begin position="833"/>
        <end position="850"/>
    </location>
</feature>
<feature type="disulfide bond" evidence="2">
    <location>
        <begin position="852"/>
        <end position="861"/>
    </location>
</feature>
<feature type="disulfide bond" evidence="2">
    <location>
        <begin position="864"/>
        <end position="874"/>
    </location>
</feature>
<feature type="disulfide bond" evidence="2">
    <location>
        <begin position="877"/>
        <end position="886"/>
    </location>
</feature>
<feature type="disulfide bond" evidence="2">
    <location>
        <begin position="879"/>
        <end position="893"/>
    </location>
</feature>
<feature type="disulfide bond" evidence="2">
    <location>
        <begin position="896"/>
        <end position="905"/>
    </location>
</feature>
<feature type="disulfide bond" evidence="2">
    <location>
        <begin position="908"/>
        <end position="924"/>
    </location>
</feature>
<feature type="disulfide bond" evidence="2">
    <location>
        <begin position="927"/>
        <end position="943"/>
    </location>
</feature>
<feature type="disulfide bond" evidence="2">
    <location>
        <begin position="929"/>
        <end position="954"/>
    </location>
</feature>
<feature type="disulfide bond" evidence="2">
    <location>
        <begin position="956"/>
        <end position="965"/>
    </location>
</feature>
<feature type="disulfide bond" evidence="2">
    <location>
        <begin position="968"/>
        <end position="983"/>
    </location>
</feature>
<feature type="disulfide bond" evidence="2">
    <location>
        <begin position="986"/>
        <end position="1000"/>
    </location>
</feature>
<feature type="disulfide bond" evidence="2">
    <location>
        <begin position="988"/>
        <end position="1007"/>
    </location>
</feature>
<feature type="disulfide bond" evidence="2">
    <location>
        <begin position="1010"/>
        <end position="1019"/>
    </location>
</feature>
<feature type="disulfide bond" evidence="2">
    <location>
        <begin position="1022"/>
        <end position="1035"/>
    </location>
</feature>
<feature type="disulfide bond" evidence="2">
    <location>
        <begin position="1038"/>
        <end position="1058"/>
    </location>
</feature>
<feature type="disulfide bond" evidence="2">
    <location>
        <begin position="1040"/>
        <end position="1065"/>
    </location>
</feature>
<feature type="disulfide bond" evidence="2">
    <location>
        <begin position="1067"/>
        <end position="1076"/>
    </location>
</feature>
<feature type="disulfide bond" evidence="2">
    <location>
        <begin position="1079"/>
        <end position="1092"/>
    </location>
</feature>
<feature type="disulfide bond" evidence="2">
    <location>
        <begin position="1095"/>
        <end position="1107"/>
    </location>
</feature>
<feature type="disulfide bond" evidence="2">
    <location>
        <begin position="1097"/>
        <end position="1114"/>
    </location>
</feature>
<feature type="disulfide bond" evidence="2">
    <location>
        <begin position="1116"/>
        <end position="1125"/>
    </location>
</feature>
<feature type="disulfide bond" evidence="2">
    <location>
        <begin position="1128"/>
        <end position="1140"/>
    </location>
</feature>
<feature type="disulfide bond" evidence="2">
    <location>
        <begin position="1143"/>
        <end position="1155"/>
    </location>
</feature>
<feature type="disulfide bond" evidence="2">
    <location>
        <begin position="1145"/>
        <end position="1162"/>
    </location>
</feature>
<feature type="disulfide bond" evidence="2">
    <location>
        <begin position="1164"/>
        <end position="1173"/>
    </location>
</feature>
<feature type="disulfide bond" evidence="2">
    <location>
        <begin position="1176"/>
        <end position="1187"/>
    </location>
</feature>
<feature type="disulfide bond" description="Interchain" evidence="13">
    <location>
        <position position="1190"/>
    </location>
</feature>
<feature type="disulfide bond" description="Interchain" evidence="13">
    <location>
        <position position="1193"/>
    </location>
</feature>
<feature type="disulfide bond" description="Interchain" evidence="13">
    <location>
        <position position="1797"/>
    </location>
</feature>
<feature type="sequence variant" id="VAR_066492" description="In NPHS5; dbSNP:rs387906644." evidence="10">
    <original>H</original>
    <variation>R</variation>
    <location>
        <position position="147"/>
    </location>
</feature>
<feature type="sequence variant" id="VAR_031968" description="In NPHS5; dbSNP:rs121912491." evidence="7">
    <original>R</original>
    <variation>Q</variation>
    <location>
        <position position="246"/>
    </location>
</feature>
<feature type="sequence variant" id="VAR_031969" description="In PIERS; dbSNP:rs121912488." evidence="6">
    <original>R</original>
    <variation>W</variation>
    <location>
        <position position="246"/>
    </location>
</feature>
<feature type="sequence variant" id="VAR_031970" description="In NPHS5; dbSNP:rs121912492." evidence="7 9">
    <original>C</original>
    <variation>R</variation>
    <location>
        <position position="321"/>
    </location>
</feature>
<feature type="sequence variant" id="VAR_087602" description="In NPHS5; uncertain significance; dbSNP:rs200738080." evidence="11">
    <original>R</original>
    <variation>H</variation>
    <location>
        <position position="644"/>
    </location>
</feature>
<feature type="sequence variant" id="VAR_087603" description="In dbSNP:rs142860588." evidence="11">
    <original>G</original>
    <variation>E</variation>
    <location>
        <position position="700"/>
    </location>
</feature>
<feature type="sequence variant" id="VAR_031971" description="In dbSNP:rs34759087.">
    <original>E</original>
    <variation>K</variation>
    <location>
        <position position="987"/>
    </location>
</feature>
<feature type="sequence variant" id="VAR_087604" description="In dbSNP:rs138774635." evidence="11">
    <original>R</original>
    <variation>H</variation>
    <location>
        <position position="1148"/>
    </location>
</feature>
<feature type="sequence variant" id="VAR_087605" description="In NPHS5; uncertain significance; dbSNP:rs771785818." evidence="11">
    <original>L</original>
    <variation>V</variation>
    <location>
        <position position="1258"/>
    </location>
</feature>
<feature type="sequence variant" id="VAR_031972" description="In NPHS5; associated in cis with F-1393; dbSNP:rs267607207." evidence="7 9">
    <original>N</original>
    <variation>K</variation>
    <location>
        <position position="1380"/>
    </location>
</feature>
<feature type="sequence variant" id="VAR_031973" description="In NPHS5; associated in cis with K-1380; dbSNP:rs267607208." evidence="7 9">
    <original>L</original>
    <variation>F</variation>
    <location>
        <position position="1393"/>
    </location>
</feature>
<feature type="sequence variant" id="VAR_087606" description="In dbSNP:rs74951356." evidence="11">
    <original>A</original>
    <variation>T</variation>
    <location>
        <position position="1765"/>
    </location>
</feature>
<feature type="sequence conflict" description="In Ref. 1; CAA92279." evidence="13" ref="1">
    <original>G</original>
    <variation>R</variation>
    <location>
        <position position="914"/>
    </location>
</feature>
<feature type="sequence conflict" description="In Ref. 2; AAB34682." evidence="13" ref="2">
    <original>G</original>
    <variation>A</variation>
    <location>
        <position position="1179"/>
    </location>
</feature>
<dbReference type="EMBL" id="Z68155">
    <property type="protein sequence ID" value="CAA92279.1"/>
    <property type="molecule type" value="Genomic_DNA"/>
</dbReference>
<dbReference type="EMBL" id="Z68156">
    <property type="protein sequence ID" value="CAA92279.1"/>
    <property type="status" value="JOINED"/>
    <property type="molecule type" value="Genomic_DNA"/>
</dbReference>
<dbReference type="EMBL" id="X79683">
    <property type="protein sequence ID" value="CAA56130.1"/>
    <property type="molecule type" value="mRNA"/>
</dbReference>
<dbReference type="EMBL" id="S77512">
    <property type="protein sequence ID" value="AAB34682.2"/>
    <property type="molecule type" value="mRNA"/>
</dbReference>
<dbReference type="CCDS" id="CCDS2789.1"/>
<dbReference type="PIR" id="A55677">
    <property type="entry name" value="A55677"/>
</dbReference>
<dbReference type="PIR" id="S53869">
    <property type="entry name" value="S53869"/>
</dbReference>
<dbReference type="RefSeq" id="NP_002283.3">
    <property type="nucleotide sequence ID" value="NM_002292.3"/>
</dbReference>
<dbReference type="RefSeq" id="XP_005265184.1">
    <property type="nucleotide sequence ID" value="XM_005265127.5"/>
</dbReference>
<dbReference type="SMR" id="P55268"/>
<dbReference type="BioGRID" id="110107">
    <property type="interactions" value="166"/>
</dbReference>
<dbReference type="ComplexPortal" id="CPX-1772">
    <property type="entry name" value="Laminin-121 complex"/>
</dbReference>
<dbReference type="ComplexPortal" id="CPX-1773">
    <property type="entry name" value="Laminin-221 complex"/>
</dbReference>
<dbReference type="ComplexPortal" id="CPX-1776">
    <property type="entry name" value="Laminin-321 complex"/>
</dbReference>
<dbReference type="ComplexPortal" id="CPX-1778">
    <property type="entry name" value="Laminin-421 complex"/>
</dbReference>
<dbReference type="ComplexPortal" id="CPX-1780">
    <property type="entry name" value="Laminin-521 complex"/>
</dbReference>
<dbReference type="ComplexPortal" id="CPX-1782">
    <property type="entry name" value="Laminin-423 complex"/>
</dbReference>
<dbReference type="ComplexPortal" id="CPX-1783">
    <property type="entry name" value="Laminin-522 complex"/>
</dbReference>
<dbReference type="ComplexPortal" id="CPX-1784">
    <property type="entry name" value="Laminin-523 complex"/>
</dbReference>
<dbReference type="CORUM" id="P55268"/>
<dbReference type="DIP" id="DIP-42106N"/>
<dbReference type="FunCoup" id="P55268">
    <property type="interactions" value="1007"/>
</dbReference>
<dbReference type="IntAct" id="P55268">
    <property type="interactions" value="101"/>
</dbReference>
<dbReference type="MINT" id="P55268"/>
<dbReference type="STRING" id="9606.ENSP00000307156"/>
<dbReference type="ChEMBL" id="CHEMBL2364187"/>
<dbReference type="GlyConnect" id="1443">
    <property type="glycosylation" value="4 N-Linked glycans (4 sites)"/>
</dbReference>
<dbReference type="GlyCosmos" id="P55268">
    <property type="glycosylation" value="10 sites, 6 glycans"/>
</dbReference>
<dbReference type="GlyGen" id="P55268">
    <property type="glycosylation" value="11 sites, 59 N-linked glycans (6 sites), 2 O-linked glycans (3 sites)"/>
</dbReference>
<dbReference type="iPTMnet" id="P55268"/>
<dbReference type="PhosphoSitePlus" id="P55268"/>
<dbReference type="SwissPalm" id="P55268"/>
<dbReference type="BioMuta" id="LAMB2"/>
<dbReference type="DMDM" id="156630892"/>
<dbReference type="jPOST" id="P55268"/>
<dbReference type="MassIVE" id="P55268"/>
<dbReference type="PaxDb" id="9606-ENSP00000388325"/>
<dbReference type="PeptideAtlas" id="P55268"/>
<dbReference type="ProteomicsDB" id="56831"/>
<dbReference type="Pumba" id="P55268"/>
<dbReference type="Antibodypedia" id="995">
    <property type="antibodies" value="394 antibodies from 30 providers"/>
</dbReference>
<dbReference type="DNASU" id="3913"/>
<dbReference type="Ensembl" id="ENST00000305544.9">
    <property type="protein sequence ID" value="ENSP00000307156.4"/>
    <property type="gene ID" value="ENSG00000172037.14"/>
</dbReference>
<dbReference type="Ensembl" id="ENST00000418109.5">
    <property type="protein sequence ID" value="ENSP00000388325.1"/>
    <property type="gene ID" value="ENSG00000172037.14"/>
</dbReference>
<dbReference type="GeneID" id="3913"/>
<dbReference type="KEGG" id="hsa:3913"/>
<dbReference type="MANE-Select" id="ENST00000305544.9">
    <property type="protein sequence ID" value="ENSP00000307156.4"/>
    <property type="RefSeq nucleotide sequence ID" value="NM_002292.4"/>
    <property type="RefSeq protein sequence ID" value="NP_002283.3"/>
</dbReference>
<dbReference type="UCSC" id="uc003cwe.4">
    <property type="organism name" value="human"/>
</dbReference>
<dbReference type="AGR" id="HGNC:6487"/>
<dbReference type="CTD" id="3913"/>
<dbReference type="DisGeNET" id="3913"/>
<dbReference type="GeneCards" id="LAMB2"/>
<dbReference type="GeneReviews" id="LAMB2"/>
<dbReference type="HGNC" id="HGNC:6487">
    <property type="gene designation" value="LAMB2"/>
</dbReference>
<dbReference type="HPA" id="ENSG00000172037">
    <property type="expression patterns" value="Low tissue specificity"/>
</dbReference>
<dbReference type="MalaCards" id="LAMB2"/>
<dbReference type="MIM" id="150325">
    <property type="type" value="gene"/>
</dbReference>
<dbReference type="MIM" id="609049">
    <property type="type" value="phenotype"/>
</dbReference>
<dbReference type="MIM" id="614199">
    <property type="type" value="phenotype"/>
</dbReference>
<dbReference type="neXtProt" id="NX_P55268"/>
<dbReference type="OpenTargets" id="ENSG00000172037"/>
<dbReference type="Orphanet" id="2670">
    <property type="disease" value="Pierson syndrome"/>
</dbReference>
<dbReference type="Orphanet" id="98915">
    <property type="disease" value="Synaptic congenital myasthenic syndromes"/>
</dbReference>
<dbReference type="PharmGKB" id="PA164741827"/>
<dbReference type="VEuPathDB" id="HostDB:ENSG00000172037"/>
<dbReference type="eggNOG" id="KOG0994">
    <property type="taxonomic scope" value="Eukaryota"/>
</dbReference>
<dbReference type="GeneTree" id="ENSGT00940000156060"/>
<dbReference type="HOGENOM" id="CLU_001560_1_0_1"/>
<dbReference type="InParanoid" id="P55268"/>
<dbReference type="OMA" id="SCRDHTG"/>
<dbReference type="OrthoDB" id="5985440at2759"/>
<dbReference type="PAN-GO" id="P55268">
    <property type="GO annotations" value="8 GO annotations based on evolutionary models"/>
</dbReference>
<dbReference type="PhylomeDB" id="P55268"/>
<dbReference type="TreeFam" id="TF312903"/>
<dbReference type="PathwayCommons" id="P55268"/>
<dbReference type="Reactome" id="R-HSA-3000157">
    <property type="pathway name" value="Laminin interactions"/>
</dbReference>
<dbReference type="Reactome" id="R-HSA-3000171">
    <property type="pathway name" value="Non-integrin membrane-ECM interactions"/>
</dbReference>
<dbReference type="Reactome" id="R-HSA-3000178">
    <property type="pathway name" value="ECM proteoglycans"/>
</dbReference>
<dbReference type="Reactome" id="R-HSA-381426">
    <property type="pathway name" value="Regulation of Insulin-like Growth Factor (IGF) transport and uptake by Insulin-like Growth Factor Binding Proteins (IGFBPs)"/>
</dbReference>
<dbReference type="Reactome" id="R-HSA-8874081">
    <property type="pathway name" value="MET activates PTK2 signaling"/>
</dbReference>
<dbReference type="Reactome" id="R-HSA-8957275">
    <property type="pathway name" value="Post-translational protein phosphorylation"/>
</dbReference>
<dbReference type="Reactome" id="R-HSA-9913351">
    <property type="pathway name" value="Formation of the dystrophin-glycoprotein complex (DGC)"/>
</dbReference>
<dbReference type="SignaLink" id="P55268"/>
<dbReference type="SIGNOR" id="P55268"/>
<dbReference type="BioGRID-ORCS" id="3913">
    <property type="hits" value="14 hits in 1160 CRISPR screens"/>
</dbReference>
<dbReference type="ChiTaRS" id="LAMB2">
    <property type="organism name" value="human"/>
</dbReference>
<dbReference type="GeneWiki" id="Laminin,_beta_2"/>
<dbReference type="GenomeRNAi" id="3913"/>
<dbReference type="Pharos" id="P55268">
    <property type="development level" value="Tbio"/>
</dbReference>
<dbReference type="PRO" id="PR:P55268"/>
<dbReference type="Proteomes" id="UP000005640">
    <property type="component" value="Chromosome 3"/>
</dbReference>
<dbReference type="RNAct" id="P55268">
    <property type="molecule type" value="protein"/>
</dbReference>
<dbReference type="Bgee" id="ENSG00000172037">
    <property type="expression patterns" value="Expressed in apex of heart and 180 other cell types or tissues"/>
</dbReference>
<dbReference type="ExpressionAtlas" id="P55268">
    <property type="expression patterns" value="baseline and differential"/>
</dbReference>
<dbReference type="GO" id="GO:0005604">
    <property type="term" value="C:basement membrane"/>
    <property type="evidence" value="ECO:0000314"/>
    <property type="project" value="UniProtKB"/>
</dbReference>
<dbReference type="GO" id="GO:0062023">
    <property type="term" value="C:collagen-containing extracellular matrix"/>
    <property type="evidence" value="ECO:0007005"/>
    <property type="project" value="BHF-UCL"/>
</dbReference>
<dbReference type="GO" id="GO:0005788">
    <property type="term" value="C:endoplasmic reticulum lumen"/>
    <property type="evidence" value="ECO:0000304"/>
    <property type="project" value="Reactome"/>
</dbReference>
<dbReference type="GO" id="GO:0070062">
    <property type="term" value="C:extracellular exosome"/>
    <property type="evidence" value="ECO:0007005"/>
    <property type="project" value="UniProtKB"/>
</dbReference>
<dbReference type="GO" id="GO:0005576">
    <property type="term" value="C:extracellular region"/>
    <property type="evidence" value="ECO:0000304"/>
    <property type="project" value="Reactome"/>
</dbReference>
<dbReference type="GO" id="GO:0043260">
    <property type="term" value="C:laminin-11 complex"/>
    <property type="evidence" value="ECO:0000304"/>
    <property type="project" value="BHF-UCL"/>
</dbReference>
<dbReference type="GO" id="GO:0005608">
    <property type="term" value="C:laminin-3 complex"/>
    <property type="evidence" value="ECO:0000353"/>
    <property type="project" value="UniProtKB"/>
</dbReference>
<dbReference type="GO" id="GO:0031594">
    <property type="term" value="C:neuromuscular junction"/>
    <property type="evidence" value="ECO:0007669"/>
    <property type="project" value="Ensembl"/>
</dbReference>
<dbReference type="GO" id="GO:0098637">
    <property type="term" value="C:protein complex involved in cell-matrix adhesion"/>
    <property type="evidence" value="ECO:0000303"/>
    <property type="project" value="ComplexPortal"/>
</dbReference>
<dbReference type="GO" id="GO:0043083">
    <property type="term" value="C:synaptic cleft"/>
    <property type="evidence" value="ECO:0007669"/>
    <property type="project" value="Ensembl"/>
</dbReference>
<dbReference type="GO" id="GO:0005201">
    <property type="term" value="F:extracellular matrix structural constituent"/>
    <property type="evidence" value="ECO:0000250"/>
    <property type="project" value="BHF-UCL"/>
</dbReference>
<dbReference type="GO" id="GO:0005178">
    <property type="term" value="F:integrin binding"/>
    <property type="evidence" value="ECO:0007669"/>
    <property type="project" value="Ensembl"/>
</dbReference>
<dbReference type="GO" id="GO:0150043">
    <property type="term" value="F:structural constituent of synapse-associated extracellular matrix"/>
    <property type="evidence" value="ECO:0007669"/>
    <property type="project" value="Ensembl"/>
</dbReference>
<dbReference type="GO" id="GO:0005198">
    <property type="term" value="F:structural molecule activity"/>
    <property type="evidence" value="ECO:0000303"/>
    <property type="project" value="ProtInc"/>
</dbReference>
<dbReference type="GO" id="GO:0014002">
    <property type="term" value="P:astrocyte development"/>
    <property type="evidence" value="ECO:0007669"/>
    <property type="project" value="Ensembl"/>
</dbReference>
<dbReference type="GO" id="GO:0048677">
    <property type="term" value="P:axon extension involved in regeneration"/>
    <property type="evidence" value="ECO:0007669"/>
    <property type="project" value="Ensembl"/>
</dbReference>
<dbReference type="GO" id="GO:0007411">
    <property type="term" value="P:axon guidance"/>
    <property type="evidence" value="ECO:0007669"/>
    <property type="project" value="Ensembl"/>
</dbReference>
<dbReference type="GO" id="GO:0007155">
    <property type="term" value="P:cell adhesion"/>
    <property type="evidence" value="ECO:0007669"/>
    <property type="project" value="UniProtKB-KW"/>
</dbReference>
<dbReference type="GO" id="GO:0072274">
    <property type="term" value="P:metanephric glomerular basement membrane development"/>
    <property type="evidence" value="ECO:0007669"/>
    <property type="project" value="Ensembl"/>
</dbReference>
<dbReference type="GO" id="GO:0072249">
    <property type="term" value="P:metanephric podocyte development"/>
    <property type="evidence" value="ECO:0007669"/>
    <property type="project" value="Ensembl"/>
</dbReference>
<dbReference type="GO" id="GO:0007528">
    <property type="term" value="P:neuromuscular junction development"/>
    <property type="evidence" value="ECO:0007669"/>
    <property type="project" value="Ensembl"/>
</dbReference>
<dbReference type="GO" id="GO:0045785">
    <property type="term" value="P:positive regulation of cell adhesion"/>
    <property type="evidence" value="ECO:0000303"/>
    <property type="project" value="ComplexPortal"/>
</dbReference>
<dbReference type="GO" id="GO:2001046">
    <property type="term" value="P:positive regulation of integrin-mediated signaling pathway"/>
    <property type="evidence" value="ECO:0000303"/>
    <property type="project" value="ComplexPortal"/>
</dbReference>
<dbReference type="GO" id="GO:0051149">
    <property type="term" value="P:positive regulation of muscle cell differentiation"/>
    <property type="evidence" value="ECO:0000303"/>
    <property type="project" value="ComplexPortal"/>
</dbReference>
<dbReference type="GO" id="GO:0110011">
    <property type="term" value="P:regulation of basement membrane organization"/>
    <property type="evidence" value="ECO:0000303"/>
    <property type="project" value="ComplexPortal"/>
</dbReference>
<dbReference type="GO" id="GO:0060041">
    <property type="term" value="P:retina development in camera-type eye"/>
    <property type="evidence" value="ECO:0007669"/>
    <property type="project" value="Ensembl"/>
</dbReference>
<dbReference type="GO" id="GO:0014044">
    <property type="term" value="P:Schwann cell development"/>
    <property type="evidence" value="ECO:0007669"/>
    <property type="project" value="Ensembl"/>
</dbReference>
<dbReference type="GO" id="GO:0007601">
    <property type="term" value="P:visual perception"/>
    <property type="evidence" value="ECO:0007669"/>
    <property type="project" value="Ensembl"/>
</dbReference>
<dbReference type="CDD" id="cd22299">
    <property type="entry name" value="cc_LAMB2_C"/>
    <property type="match status" value="1"/>
</dbReference>
<dbReference type="CDD" id="cd00055">
    <property type="entry name" value="EGF_Lam"/>
    <property type="match status" value="13"/>
</dbReference>
<dbReference type="FunFam" id="2.10.25.10:FF:000011">
    <property type="entry name" value="Cadherin EGF LAG seven-pass G-type receptor"/>
    <property type="match status" value="1"/>
</dbReference>
<dbReference type="FunFam" id="2.10.25.10:FF:000084">
    <property type="entry name" value="Laminin subunit alpha 3"/>
    <property type="match status" value="1"/>
</dbReference>
<dbReference type="FunFam" id="2.10.25.10:FF:000209">
    <property type="entry name" value="Laminin subunit alpha 5"/>
    <property type="match status" value="1"/>
</dbReference>
<dbReference type="FunFam" id="2.10.25.10:FF:000065">
    <property type="entry name" value="Laminin subunit beta 1"/>
    <property type="match status" value="1"/>
</dbReference>
<dbReference type="FunFam" id="2.10.25.10:FF:000101">
    <property type="entry name" value="Laminin subunit beta 1"/>
    <property type="match status" value="1"/>
</dbReference>
<dbReference type="FunFam" id="2.10.25.10:FF:000130">
    <property type="entry name" value="Laminin subunit beta 1"/>
    <property type="match status" value="1"/>
</dbReference>
<dbReference type="FunFam" id="2.10.25.10:FF:000138">
    <property type="entry name" value="Laminin subunit beta 1"/>
    <property type="match status" value="1"/>
</dbReference>
<dbReference type="FunFam" id="2.10.25.10:FF:000145">
    <property type="entry name" value="Laminin subunit beta 1"/>
    <property type="match status" value="1"/>
</dbReference>
<dbReference type="FunFam" id="2.170.300.10:FF:000004">
    <property type="entry name" value="Laminin subunit beta 1"/>
    <property type="match status" value="1"/>
</dbReference>
<dbReference type="FunFam" id="2.60.120.260:FF:000010">
    <property type="entry name" value="Laminin subunit beta 1"/>
    <property type="match status" value="1"/>
</dbReference>
<dbReference type="FunFam" id="2.10.25.10:FF:000135">
    <property type="entry name" value="Laminin subunit beta 4"/>
    <property type="match status" value="2"/>
</dbReference>
<dbReference type="FunFam" id="2.10.25.10:FF:000280">
    <property type="entry name" value="Laminin subunit beta 4"/>
    <property type="match status" value="1"/>
</dbReference>
<dbReference type="FunFam" id="2.170.300.10:FF:000001">
    <property type="entry name" value="Laminin subunit beta-1"/>
    <property type="match status" value="1"/>
</dbReference>
<dbReference type="FunFam" id="2.10.25.10:FF:000333">
    <property type="entry name" value="netrin-4 isoform X2"/>
    <property type="match status" value="1"/>
</dbReference>
<dbReference type="Gene3D" id="2.60.120.260">
    <property type="entry name" value="Galactose-binding domain-like"/>
    <property type="match status" value="1"/>
</dbReference>
<dbReference type="Gene3D" id="2.10.25.10">
    <property type="entry name" value="Laminin"/>
    <property type="match status" value="9"/>
</dbReference>
<dbReference type="Gene3D" id="2.170.300.10">
    <property type="entry name" value="Tie2 ligand-binding domain superfamily"/>
    <property type="match status" value="2"/>
</dbReference>
<dbReference type="InterPro" id="IPR000742">
    <property type="entry name" value="EGF-like_dom"/>
</dbReference>
<dbReference type="InterPro" id="IPR056558">
    <property type="entry name" value="LAMB1-4_helical"/>
</dbReference>
<dbReference type="InterPro" id="IPR050440">
    <property type="entry name" value="Laminin/Netrin_ECM"/>
</dbReference>
<dbReference type="InterPro" id="IPR013015">
    <property type="entry name" value="Laminin_IV_B"/>
</dbReference>
<dbReference type="InterPro" id="IPR008211">
    <property type="entry name" value="Laminin_N"/>
</dbReference>
<dbReference type="InterPro" id="IPR002049">
    <property type="entry name" value="LE_dom"/>
</dbReference>
<dbReference type="InterPro" id="IPR056863">
    <property type="entry name" value="LMN_ATRN_NET-like_EGF"/>
</dbReference>
<dbReference type="PANTHER" id="PTHR10574:SF406">
    <property type="entry name" value="LAMININ SUBUNIT ALPHA 5"/>
    <property type="match status" value="1"/>
</dbReference>
<dbReference type="PANTHER" id="PTHR10574">
    <property type="entry name" value="NETRIN/LAMININ-RELATED"/>
    <property type="match status" value="1"/>
</dbReference>
<dbReference type="Pfam" id="PF00053">
    <property type="entry name" value="EGF_laminin"/>
    <property type="match status" value="11"/>
</dbReference>
<dbReference type="Pfam" id="PF24973">
    <property type="entry name" value="EGF_LMN_ATRN"/>
    <property type="match status" value="2"/>
</dbReference>
<dbReference type="Pfam" id="PF23219">
    <property type="entry name" value="LAMB1"/>
    <property type="match status" value="1"/>
</dbReference>
<dbReference type="Pfam" id="PF21199">
    <property type="entry name" value="LAMININ_IV_B"/>
    <property type="match status" value="1"/>
</dbReference>
<dbReference type="Pfam" id="PF00055">
    <property type="entry name" value="Laminin_N"/>
    <property type="match status" value="1"/>
</dbReference>
<dbReference type="PRINTS" id="PR00011">
    <property type="entry name" value="EGFLAMININ"/>
</dbReference>
<dbReference type="SMART" id="SM00181">
    <property type="entry name" value="EGF"/>
    <property type="match status" value="9"/>
</dbReference>
<dbReference type="SMART" id="SM00180">
    <property type="entry name" value="EGF_Lam"/>
    <property type="match status" value="13"/>
</dbReference>
<dbReference type="SMART" id="SM00136">
    <property type="entry name" value="LamNT"/>
    <property type="match status" value="1"/>
</dbReference>
<dbReference type="SUPFAM" id="SSF57196">
    <property type="entry name" value="EGF/Laminin"/>
    <property type="match status" value="13"/>
</dbReference>
<dbReference type="PROSITE" id="PS00022">
    <property type="entry name" value="EGF_1"/>
    <property type="match status" value="10"/>
</dbReference>
<dbReference type="PROSITE" id="PS01186">
    <property type="entry name" value="EGF_2"/>
    <property type="match status" value="2"/>
</dbReference>
<dbReference type="PROSITE" id="PS01248">
    <property type="entry name" value="EGF_LAM_1"/>
    <property type="match status" value="12"/>
</dbReference>
<dbReference type="PROSITE" id="PS50027">
    <property type="entry name" value="EGF_LAM_2"/>
    <property type="match status" value="13"/>
</dbReference>
<dbReference type="PROSITE" id="PS51116">
    <property type="entry name" value="LAMININ_IVB"/>
    <property type="match status" value="1"/>
</dbReference>
<dbReference type="PROSITE" id="PS51117">
    <property type="entry name" value="LAMININ_NTER"/>
    <property type="match status" value="1"/>
</dbReference>
<comment type="function">
    <text>Binding to cells via a high affinity receptor, laminin is thought to mediate the attachment, migration and organization of cells into tissues during embryonic development by interacting with other extracellular matrix components.</text>
</comment>
<comment type="subunit">
    <text>Laminin is a complex glycoprotein, consisting of three different polypeptide chains (alpha, beta, gamma), which are bound to each other by disulfide bonds into a cross-shaped molecule comprising one long and three short arms with globules at each end. Beta-2 is a subunit of laminin-3 (laminin-121 or S-laminin), laminin-4 (laminin-221 or S-merosin), laminin-7 (laminin-321 or KS-laminin), laminin-9 (laminin-421), laminin-11 (laminin-521), laminin-14 (laminin-423) and laminin-15 (laminin-523).</text>
</comment>
<comment type="interaction">
    <interactant intactId="EBI-2529769">
        <id>P55268</id>
    </interactant>
    <interactant intactId="EBI-746981">
        <id>Q969E8</id>
        <label>TSR2</label>
    </interactant>
    <organismsDiffer>false</organismsDiffer>
    <experiments>3</experiments>
</comment>
<comment type="subcellular location">
    <subcellularLocation>
        <location>Secreted</location>
        <location>Extracellular space</location>
        <location>Extracellular matrix</location>
        <location>Basement membrane</location>
    </subcellularLocation>
    <text>S-laminin is concentrated in the synaptic cleft of the neuromuscular junction.</text>
</comment>
<comment type="domain">
    <text>The alpha-helical domains I and II are thought to interact with other laminin chains to form a coiled coil structure.</text>
</comment>
<comment type="domain">
    <text>Domains VI and IV are globular.</text>
</comment>
<comment type="disease" evidence="6">
    <disease id="DI-02165">
        <name>Pierson syndrome</name>
        <acronym>PIERS</acronym>
        <description>An autosomal recessive disorder characterized by nephrotic syndrome with neonatal onset, diffuse mesangial sclerosis, and eye abnormalities with microcoria and hypoplasia of the ciliary and pupillary muscles. Death usually occurs within the first weeks of life. Patients who survive tend to show neurodevelopmental delay and visual loss.</description>
        <dbReference type="MIM" id="609049"/>
    </disease>
    <text>The disease is caused by variants affecting the gene represented in this entry.</text>
</comment>
<comment type="disease" evidence="7 9 10 11">
    <disease id="DI-03237">
        <name>Nephrotic syndrome 5, with or without ocular abnormalities</name>
        <acronym>NPHS5</acronym>
        <description>A form of nephrotic syndrome, a renal disease clinically characterized by severe proteinuria, resulting in complications such as hypoalbuminemia, hyperlipidemia and edema. Kidney biopsies show non-specific histologic changes such as focal segmental glomerulosclerosis and diffuse mesangial proliferation. Some affected individuals have an inherited steroid-resistant form and progress to end-stage renal failure. NPHS5 is characterized by very early onset of progressive renal failure. A subset of patients may develop mild ocular anomalies, such as myopia, nystagmus, and strabismus.</description>
        <dbReference type="MIM" id="614199"/>
    </disease>
    <text>The disease is caused by variants affecting the gene represented in this entry.</text>
</comment>
<proteinExistence type="evidence at protein level"/>
<accession>P55268</accession>
<accession>Q16321</accession>
<evidence type="ECO:0000255" key="1"/>
<evidence type="ECO:0000255" key="2">
    <source>
        <dbReference type="PROSITE-ProRule" id="PRU00460"/>
    </source>
</evidence>
<evidence type="ECO:0000255" key="3">
    <source>
        <dbReference type="PROSITE-ProRule" id="PRU00462"/>
    </source>
</evidence>
<evidence type="ECO:0000255" key="4">
    <source>
        <dbReference type="PROSITE-ProRule" id="PRU00466"/>
    </source>
</evidence>
<evidence type="ECO:0000256" key="5">
    <source>
        <dbReference type="SAM" id="MobiDB-lite"/>
    </source>
</evidence>
<evidence type="ECO:0000269" key="6">
    <source>
    </source>
</evidence>
<evidence type="ECO:0000269" key="7">
    <source>
    </source>
</evidence>
<evidence type="ECO:0000269" key="8">
    <source>
    </source>
</evidence>
<evidence type="ECO:0000269" key="9">
    <source>
    </source>
</evidence>
<evidence type="ECO:0000269" key="10">
    <source>
    </source>
</evidence>
<evidence type="ECO:0000269" key="11">
    <source>
    </source>
</evidence>
<evidence type="ECO:0000269" key="12">
    <source>
    </source>
</evidence>
<evidence type="ECO:0000305" key="13"/>
<protein>
    <recommendedName>
        <fullName>Laminin subunit beta-2</fullName>
    </recommendedName>
    <alternativeName>
        <fullName>Laminin B1s chain</fullName>
    </alternativeName>
    <alternativeName>
        <fullName>Laminin-11 subunit beta</fullName>
    </alternativeName>
    <alternativeName>
        <fullName>Laminin-14 subunit beta</fullName>
    </alternativeName>
    <alternativeName>
        <fullName>Laminin-15 subunit beta</fullName>
    </alternativeName>
    <alternativeName>
        <fullName>Laminin-3 subunit beta</fullName>
    </alternativeName>
    <alternativeName>
        <fullName>Laminin-4 subunit beta</fullName>
    </alternativeName>
    <alternativeName>
        <fullName>Laminin-7 subunit beta</fullName>
    </alternativeName>
    <alternativeName>
        <fullName>Laminin-9 subunit beta</fullName>
    </alternativeName>
    <alternativeName>
        <fullName>S-laminin subunit beta</fullName>
        <shortName>S-LAM beta</shortName>
    </alternativeName>
</protein>